<sequence>MDMTNAQRLILSNQYKMMTMLDPENAERYRRQQTIVERGFGLQMRELDRDFGEMSEDTCRTIINIMEMHHALQVSWDNLKDKQDLDERRIAFLGFDAATESRYLSYVRFMVNTEGRYTHFDSGTHGFNSQTPMWDKYQRMLAIWQSCPRQYHLSAVEISQIINA</sequence>
<protein>
    <recommendedName>
        <fullName evidence="1">UPF0304 protein YE1336</fullName>
    </recommendedName>
</protein>
<comment type="similarity">
    <text evidence="1">Belongs to the UPF0304 family.</text>
</comment>
<dbReference type="EMBL" id="AM286415">
    <property type="protein sequence ID" value="CAL11425.1"/>
    <property type="molecule type" value="Genomic_DNA"/>
</dbReference>
<dbReference type="RefSeq" id="WP_005159196.1">
    <property type="nucleotide sequence ID" value="NC_008800.1"/>
</dbReference>
<dbReference type="RefSeq" id="YP_001005653.1">
    <property type="nucleotide sequence ID" value="NC_008800.1"/>
</dbReference>
<dbReference type="SMR" id="A1JLD8"/>
<dbReference type="KEGG" id="yen:YE1336"/>
<dbReference type="PATRIC" id="fig|393305.7.peg.1455"/>
<dbReference type="eggNOG" id="COG3013">
    <property type="taxonomic scope" value="Bacteria"/>
</dbReference>
<dbReference type="HOGENOM" id="CLU_101021_1_0_6"/>
<dbReference type="OrthoDB" id="5589463at2"/>
<dbReference type="Proteomes" id="UP000000642">
    <property type="component" value="Chromosome"/>
</dbReference>
<dbReference type="Gene3D" id="1.10.287.680">
    <property type="entry name" value="Helix hairpin bin"/>
    <property type="match status" value="1"/>
</dbReference>
<dbReference type="Gene3D" id="1.10.3190.10">
    <property type="entry name" value="yfbu gene product, domain 2"/>
    <property type="match status" value="1"/>
</dbReference>
<dbReference type="HAMAP" id="MF_00762">
    <property type="entry name" value="UPF0304"/>
    <property type="match status" value="1"/>
</dbReference>
<dbReference type="InterPro" id="IPR005587">
    <property type="entry name" value="UPF0304_YfbU"/>
</dbReference>
<dbReference type="InterPro" id="IPR023146">
    <property type="entry name" value="YfbU_alpha-helical_sf"/>
</dbReference>
<dbReference type="InterPro" id="IPR023145">
    <property type="entry name" value="YfbU_helix-hairpin_sf"/>
</dbReference>
<dbReference type="NCBIfam" id="NF003936">
    <property type="entry name" value="PRK05445.1"/>
    <property type="match status" value="1"/>
</dbReference>
<dbReference type="Pfam" id="PF03887">
    <property type="entry name" value="YfbU"/>
    <property type="match status" value="1"/>
</dbReference>
<dbReference type="PIRSF" id="PIRSF006272">
    <property type="entry name" value="UCP006272"/>
    <property type="match status" value="1"/>
</dbReference>
<dbReference type="SUPFAM" id="SSF116960">
    <property type="entry name" value="YfbU-like"/>
    <property type="match status" value="1"/>
</dbReference>
<accession>A1JLD8</accession>
<organism>
    <name type="scientific">Yersinia enterocolitica serotype O:8 / biotype 1B (strain NCTC 13174 / 8081)</name>
    <dbReference type="NCBI Taxonomy" id="393305"/>
    <lineage>
        <taxon>Bacteria</taxon>
        <taxon>Pseudomonadati</taxon>
        <taxon>Pseudomonadota</taxon>
        <taxon>Gammaproteobacteria</taxon>
        <taxon>Enterobacterales</taxon>
        <taxon>Yersiniaceae</taxon>
        <taxon>Yersinia</taxon>
    </lineage>
</organism>
<name>Y1336_YERE8</name>
<reference key="1">
    <citation type="journal article" date="2006" name="PLoS Genet.">
        <title>The complete genome sequence and comparative genome analysis of the high pathogenicity Yersinia enterocolitica strain 8081.</title>
        <authorList>
            <person name="Thomson N.R."/>
            <person name="Howard S."/>
            <person name="Wren B.W."/>
            <person name="Holden M.T.G."/>
            <person name="Crossman L."/>
            <person name="Challis G.L."/>
            <person name="Churcher C."/>
            <person name="Mungall K."/>
            <person name="Brooks K."/>
            <person name="Chillingworth T."/>
            <person name="Feltwell T."/>
            <person name="Abdellah Z."/>
            <person name="Hauser H."/>
            <person name="Jagels K."/>
            <person name="Maddison M."/>
            <person name="Moule S."/>
            <person name="Sanders M."/>
            <person name="Whitehead S."/>
            <person name="Quail M.A."/>
            <person name="Dougan G."/>
            <person name="Parkhill J."/>
            <person name="Prentice M.B."/>
        </authorList>
    </citation>
    <scope>NUCLEOTIDE SEQUENCE [LARGE SCALE GENOMIC DNA]</scope>
    <source>
        <strain>NCTC 13174 / 8081</strain>
    </source>
</reference>
<feature type="chain" id="PRO_1000046769" description="UPF0304 protein YE1336">
    <location>
        <begin position="1"/>
        <end position="164"/>
    </location>
</feature>
<proteinExistence type="inferred from homology"/>
<gene>
    <name type="ordered locus">YE1336</name>
</gene>
<evidence type="ECO:0000255" key="1">
    <source>
        <dbReference type="HAMAP-Rule" id="MF_00762"/>
    </source>
</evidence>